<comment type="function">
    <text evidence="1">Necessary for the introduction of cis unsaturation into fatty acids. Catalyzes the dehydration of (3R)-3-hydroxydecanoyl-ACP to E-(2)-decenoyl-ACP and then its isomerization to Z-(3)-decenoyl-ACP. Can catalyze the dehydratase reaction for beta-hydroxyacyl-ACPs with saturated chain lengths up to 16:0, being most active on intermediate chain length.</text>
</comment>
<comment type="catalytic activity">
    <reaction evidence="1">
        <text>a (3R)-hydroxyacyl-[ACP] = a (2E)-enoyl-[ACP] + H2O</text>
        <dbReference type="Rhea" id="RHEA:13097"/>
        <dbReference type="Rhea" id="RHEA-COMP:9925"/>
        <dbReference type="Rhea" id="RHEA-COMP:9945"/>
        <dbReference type="ChEBI" id="CHEBI:15377"/>
        <dbReference type="ChEBI" id="CHEBI:78784"/>
        <dbReference type="ChEBI" id="CHEBI:78827"/>
        <dbReference type="EC" id="4.2.1.59"/>
    </reaction>
</comment>
<comment type="catalytic activity">
    <reaction evidence="1">
        <text>(3R)-hydroxydecanoyl-[ACP] = (2E)-decenoyl-[ACP] + H2O</text>
        <dbReference type="Rhea" id="RHEA:41860"/>
        <dbReference type="Rhea" id="RHEA-COMP:9638"/>
        <dbReference type="Rhea" id="RHEA-COMP:9639"/>
        <dbReference type="ChEBI" id="CHEBI:15377"/>
        <dbReference type="ChEBI" id="CHEBI:78466"/>
        <dbReference type="ChEBI" id="CHEBI:78467"/>
    </reaction>
</comment>
<comment type="catalytic activity">
    <reaction evidence="1">
        <text>(2E)-decenoyl-[ACP] = (3Z)-decenoyl-[ACP]</text>
        <dbReference type="Rhea" id="RHEA:23568"/>
        <dbReference type="Rhea" id="RHEA-COMP:9639"/>
        <dbReference type="Rhea" id="RHEA-COMP:9927"/>
        <dbReference type="ChEBI" id="CHEBI:78467"/>
        <dbReference type="ChEBI" id="CHEBI:78798"/>
        <dbReference type="EC" id="5.3.3.14"/>
    </reaction>
</comment>
<comment type="pathway">
    <text evidence="1">Lipid metabolism; fatty acid biosynthesis.</text>
</comment>
<comment type="subunit">
    <text evidence="1">Homodimer.</text>
</comment>
<comment type="subcellular location">
    <subcellularLocation>
        <location evidence="1">Cytoplasm</location>
    </subcellularLocation>
</comment>
<comment type="similarity">
    <text evidence="1">Belongs to the thioester dehydratase family. FabA subfamily.</text>
</comment>
<evidence type="ECO:0000255" key="1">
    <source>
        <dbReference type="HAMAP-Rule" id="MF_00405"/>
    </source>
</evidence>
<proteinExistence type="inferred from homology"/>
<sequence length="172" mass="18969">MVDKRESYTKEDLLASGRGELFGAKGPQLPAPNMLMMDRVVKMTETGGNFDKGYVEAELDINPDLWFFGCHFIGDPVMPGCLGLDAMWQLVGFYLGWLGGEGKGRALGVGEVKFTGQVLPTAKKVTYRIHFKRIVNRRLIMGLADGEVLVDGRLIYTASDLKVGLFQDTSAF</sequence>
<dbReference type="EC" id="4.2.1.59" evidence="1"/>
<dbReference type="EC" id="5.3.3.14" evidence="1"/>
<dbReference type="EMBL" id="CP000970">
    <property type="protein sequence ID" value="ACB17463.1"/>
    <property type="molecule type" value="Genomic_DNA"/>
</dbReference>
<dbReference type="RefSeq" id="WP_000227927.1">
    <property type="nucleotide sequence ID" value="NC_010498.1"/>
</dbReference>
<dbReference type="SMR" id="B1LJQ9"/>
<dbReference type="GeneID" id="93776460"/>
<dbReference type="KEGG" id="ecm:EcSMS35_2166"/>
<dbReference type="HOGENOM" id="CLU_097925_0_0_6"/>
<dbReference type="UniPathway" id="UPA00094"/>
<dbReference type="Proteomes" id="UP000007011">
    <property type="component" value="Chromosome"/>
</dbReference>
<dbReference type="GO" id="GO:0005737">
    <property type="term" value="C:cytoplasm"/>
    <property type="evidence" value="ECO:0007669"/>
    <property type="project" value="UniProtKB-SubCell"/>
</dbReference>
<dbReference type="GO" id="GO:0019171">
    <property type="term" value="F:(3R)-hydroxyacyl-[acyl-carrier-protein] dehydratase activity"/>
    <property type="evidence" value="ECO:0007669"/>
    <property type="project" value="UniProtKB-UniRule"/>
</dbReference>
<dbReference type="GO" id="GO:0034017">
    <property type="term" value="F:trans-2-decenoyl-acyl-carrier-protein isomerase activity"/>
    <property type="evidence" value="ECO:0007669"/>
    <property type="project" value="UniProtKB-UniRule"/>
</dbReference>
<dbReference type="GO" id="GO:0006636">
    <property type="term" value="P:unsaturated fatty acid biosynthetic process"/>
    <property type="evidence" value="ECO:0007669"/>
    <property type="project" value="UniProtKB-UniRule"/>
</dbReference>
<dbReference type="CDD" id="cd01287">
    <property type="entry name" value="FabA"/>
    <property type="match status" value="1"/>
</dbReference>
<dbReference type="FunFam" id="3.10.129.10:FF:000003">
    <property type="entry name" value="3-hydroxydecanoyl-[acyl-carrier-protein] dehydratase"/>
    <property type="match status" value="1"/>
</dbReference>
<dbReference type="Gene3D" id="3.10.129.10">
    <property type="entry name" value="Hotdog Thioesterase"/>
    <property type="match status" value="1"/>
</dbReference>
<dbReference type="HAMAP" id="MF_00405">
    <property type="entry name" value="FabA"/>
    <property type="match status" value="1"/>
</dbReference>
<dbReference type="InterPro" id="IPR010083">
    <property type="entry name" value="FabA"/>
</dbReference>
<dbReference type="InterPro" id="IPR013114">
    <property type="entry name" value="FabA_FabZ"/>
</dbReference>
<dbReference type="InterPro" id="IPR029069">
    <property type="entry name" value="HotDog_dom_sf"/>
</dbReference>
<dbReference type="NCBIfam" id="TIGR01749">
    <property type="entry name" value="fabA"/>
    <property type="match status" value="1"/>
</dbReference>
<dbReference type="NCBIfam" id="NF003509">
    <property type="entry name" value="PRK05174.1"/>
    <property type="match status" value="1"/>
</dbReference>
<dbReference type="PANTHER" id="PTHR30272">
    <property type="entry name" value="3-HYDROXYACYL-[ACYL-CARRIER-PROTEIN] DEHYDRATASE"/>
    <property type="match status" value="1"/>
</dbReference>
<dbReference type="PANTHER" id="PTHR30272:SF8">
    <property type="entry name" value="3-HYDROXYDECANOYL-[ACYL-CARRIER-PROTEIN] DEHYDRATASE"/>
    <property type="match status" value="1"/>
</dbReference>
<dbReference type="Pfam" id="PF07977">
    <property type="entry name" value="FabA"/>
    <property type="match status" value="1"/>
</dbReference>
<dbReference type="SUPFAM" id="SSF54637">
    <property type="entry name" value="Thioesterase/thiol ester dehydrase-isomerase"/>
    <property type="match status" value="1"/>
</dbReference>
<gene>
    <name evidence="1" type="primary">fabA</name>
    <name type="ordered locus">EcSMS35_2166</name>
</gene>
<keyword id="KW-0963">Cytoplasm</keyword>
<keyword id="KW-0275">Fatty acid biosynthesis</keyword>
<keyword id="KW-0276">Fatty acid metabolism</keyword>
<keyword id="KW-0413">Isomerase</keyword>
<keyword id="KW-0444">Lipid biosynthesis</keyword>
<keyword id="KW-0443">Lipid metabolism</keyword>
<keyword id="KW-0456">Lyase</keyword>
<name>FABA_ECOSM</name>
<accession>B1LJQ9</accession>
<protein>
    <recommendedName>
        <fullName evidence="1">3-hydroxydecanoyl-[acyl-carrier-protein] dehydratase</fullName>
        <ecNumber evidence="1">4.2.1.59</ecNumber>
    </recommendedName>
    <alternativeName>
        <fullName evidence="1">3-hydroxyacyl-[acyl-carrier-protein] dehydratase FabA</fullName>
    </alternativeName>
    <alternativeName>
        <fullName evidence="1">Beta-hydroxydecanoyl thioester dehydrase</fullName>
    </alternativeName>
    <alternativeName>
        <fullName evidence="1">Trans-2-decenoyl-[acyl-carrier-protein] isomerase</fullName>
        <ecNumber evidence="1">5.3.3.14</ecNumber>
    </alternativeName>
</protein>
<reference key="1">
    <citation type="journal article" date="2008" name="J. Bacteriol.">
        <title>Insights into the environmental resistance gene pool from the genome sequence of the multidrug-resistant environmental isolate Escherichia coli SMS-3-5.</title>
        <authorList>
            <person name="Fricke W.F."/>
            <person name="Wright M.S."/>
            <person name="Lindell A.H."/>
            <person name="Harkins D.M."/>
            <person name="Baker-Austin C."/>
            <person name="Ravel J."/>
            <person name="Stepanauskas R."/>
        </authorList>
    </citation>
    <scope>NUCLEOTIDE SEQUENCE [LARGE SCALE GENOMIC DNA]</scope>
    <source>
        <strain>SMS-3-5 / SECEC</strain>
    </source>
</reference>
<feature type="chain" id="PRO_1000201180" description="3-hydroxydecanoyl-[acyl-carrier-protein] dehydratase">
    <location>
        <begin position="1"/>
        <end position="172"/>
    </location>
</feature>
<feature type="active site" evidence="1">
    <location>
        <position position="71"/>
    </location>
</feature>
<organism>
    <name type="scientific">Escherichia coli (strain SMS-3-5 / SECEC)</name>
    <dbReference type="NCBI Taxonomy" id="439855"/>
    <lineage>
        <taxon>Bacteria</taxon>
        <taxon>Pseudomonadati</taxon>
        <taxon>Pseudomonadota</taxon>
        <taxon>Gammaproteobacteria</taxon>
        <taxon>Enterobacterales</taxon>
        <taxon>Enterobacteriaceae</taxon>
        <taxon>Escherichia</taxon>
    </lineage>
</organism>